<evidence type="ECO:0000255" key="1">
    <source>
        <dbReference type="PROSITE-ProRule" id="PRU00724"/>
    </source>
</evidence>
<evidence type="ECO:0000256" key="2">
    <source>
        <dbReference type="SAM" id="MobiDB-lite"/>
    </source>
</evidence>
<evidence type="ECO:0000269" key="3">
    <source>
    </source>
</evidence>
<evidence type="ECO:0000269" key="4">
    <source>
    </source>
</evidence>
<evidence type="ECO:0000269" key="5">
    <source>
    </source>
</evidence>
<evidence type="ECO:0000269" key="6">
    <source>
    </source>
</evidence>
<evidence type="ECO:0000269" key="7">
    <source>
    </source>
</evidence>
<evidence type="ECO:0000269" key="8">
    <source>
    </source>
</evidence>
<evidence type="ECO:0000269" key="9">
    <source>
    </source>
</evidence>
<evidence type="ECO:0000305" key="10"/>
<evidence type="ECO:0007829" key="11">
    <source>
        <dbReference type="PDB" id="1SZ9"/>
    </source>
</evidence>
<evidence type="ECO:0007829" key="12">
    <source>
        <dbReference type="PDB" id="2NAX"/>
    </source>
</evidence>
<evidence type="ECO:0007829" key="13">
    <source>
        <dbReference type="PDB" id="4OI4"/>
    </source>
</evidence>
<evidence type="ECO:0007829" key="14">
    <source>
        <dbReference type="PDB" id="5M9Z"/>
    </source>
</evidence>
<dbReference type="EMBL" id="Z48612">
    <property type="protein sequence ID" value="CAA88508.1"/>
    <property type="molecule type" value="Genomic_DNA"/>
</dbReference>
<dbReference type="EMBL" id="U13239">
    <property type="protein sequence ID" value="AAC33145.1"/>
    <property type="molecule type" value="Genomic_DNA"/>
</dbReference>
<dbReference type="EMBL" id="BK006938">
    <property type="protein sequence ID" value="DAA12070.1"/>
    <property type="molecule type" value="Genomic_DNA"/>
</dbReference>
<dbReference type="PIR" id="S59435">
    <property type="entry name" value="S59435"/>
</dbReference>
<dbReference type="RefSeq" id="NP_010514.3">
    <property type="nucleotide sequence ID" value="NM_001180536.3"/>
</dbReference>
<dbReference type="PDB" id="1SZ9">
    <property type="method" value="X-ray"/>
    <property type="resolution" value="2.10 A"/>
    <property type="chains" value="A/B/C=1-140"/>
</dbReference>
<dbReference type="PDB" id="1SZA">
    <property type="method" value="X-ray"/>
    <property type="resolution" value="2.20 A"/>
    <property type="chains" value="A/B/C=1-140"/>
</dbReference>
<dbReference type="PDB" id="2BF0">
    <property type="method" value="X-ray"/>
    <property type="resolution" value="2.30 A"/>
    <property type="chains" value="X=1-138"/>
</dbReference>
<dbReference type="PDB" id="2NAX">
    <property type="method" value="NMR"/>
    <property type="chains" value="A=538-608"/>
</dbReference>
<dbReference type="PDB" id="2NPI">
    <property type="method" value="X-ray"/>
    <property type="resolution" value="2.95 A"/>
    <property type="chains" value="C/D=454-563"/>
</dbReference>
<dbReference type="PDB" id="4C0B">
    <property type="method" value="X-ray"/>
    <property type="resolution" value="2.77 A"/>
    <property type="chains" value="C/D=454-563"/>
</dbReference>
<dbReference type="PDB" id="4C0H">
    <property type="method" value="X-ray"/>
    <property type="resolution" value="2.70 A"/>
    <property type="chains" value="C/D=454-563"/>
</dbReference>
<dbReference type="PDB" id="4OI4">
    <property type="method" value="X-ray"/>
    <property type="resolution" value="2.40 A"/>
    <property type="chains" value="B/D/U=454-563"/>
</dbReference>
<dbReference type="PDB" id="5M9Z">
    <property type="method" value="NMR"/>
    <property type="chains" value="A=530-626"/>
</dbReference>
<dbReference type="PDBsum" id="1SZ9"/>
<dbReference type="PDBsum" id="1SZA"/>
<dbReference type="PDBsum" id="2BF0"/>
<dbReference type="PDBsum" id="2NAX"/>
<dbReference type="PDBsum" id="2NPI"/>
<dbReference type="PDBsum" id="4C0B"/>
<dbReference type="PDBsum" id="4C0H"/>
<dbReference type="PDBsum" id="4OI4"/>
<dbReference type="PDBsum" id="5M9Z"/>
<dbReference type="BMRB" id="P39081"/>
<dbReference type="SMR" id="P39081"/>
<dbReference type="BioGRID" id="32280">
    <property type="interactions" value="389"/>
</dbReference>
<dbReference type="ComplexPortal" id="CPX-1895">
    <property type="entry name" value="mRNA cleavage factor complex CFIA"/>
</dbReference>
<dbReference type="ComplexPortal" id="CPX-1896">
    <property type="entry name" value="mRNA cleavage factor complex CFI"/>
</dbReference>
<dbReference type="DIP" id="DIP-944N"/>
<dbReference type="FunCoup" id="P39081">
    <property type="interactions" value="590"/>
</dbReference>
<dbReference type="IntAct" id="P39081">
    <property type="interactions" value="88"/>
</dbReference>
<dbReference type="MINT" id="P39081"/>
<dbReference type="STRING" id="4932.YDR228C"/>
<dbReference type="GlyGen" id="P39081">
    <property type="glycosylation" value="1 site"/>
</dbReference>
<dbReference type="iPTMnet" id="P39081"/>
<dbReference type="PaxDb" id="4932-YDR228C"/>
<dbReference type="PeptideAtlas" id="P39081"/>
<dbReference type="EnsemblFungi" id="YDR228C_mRNA">
    <property type="protein sequence ID" value="YDR228C"/>
    <property type="gene ID" value="YDR228C"/>
</dbReference>
<dbReference type="GeneID" id="851814"/>
<dbReference type="KEGG" id="sce:YDR228C"/>
<dbReference type="AGR" id="SGD:S000002636"/>
<dbReference type="SGD" id="S000002636">
    <property type="gene designation" value="PCF11"/>
</dbReference>
<dbReference type="VEuPathDB" id="FungiDB:YDR228C"/>
<dbReference type="eggNOG" id="KOG2071">
    <property type="taxonomic scope" value="Eukaryota"/>
</dbReference>
<dbReference type="GeneTree" id="ENSGT00440000034259"/>
<dbReference type="HOGENOM" id="CLU_015606_1_0_1"/>
<dbReference type="InParanoid" id="P39081"/>
<dbReference type="OMA" id="PHANKNI"/>
<dbReference type="OrthoDB" id="2129491at2759"/>
<dbReference type="BioCyc" id="YEAST:G3O-29807-MONOMER"/>
<dbReference type="BioGRID-ORCS" id="851814">
    <property type="hits" value="1 hit in 10 CRISPR screens"/>
</dbReference>
<dbReference type="EvolutionaryTrace" id="P39081"/>
<dbReference type="PRO" id="PR:P39081"/>
<dbReference type="Proteomes" id="UP000002311">
    <property type="component" value="Chromosome IV"/>
</dbReference>
<dbReference type="RNAct" id="P39081">
    <property type="molecule type" value="protein"/>
</dbReference>
<dbReference type="GO" id="GO:0005737">
    <property type="term" value="C:cytoplasm"/>
    <property type="evidence" value="ECO:0000318"/>
    <property type="project" value="GO_Central"/>
</dbReference>
<dbReference type="GO" id="GO:0005829">
    <property type="term" value="C:cytosol"/>
    <property type="evidence" value="ECO:0000314"/>
    <property type="project" value="SGD"/>
</dbReference>
<dbReference type="GO" id="GO:0005849">
    <property type="term" value="C:mRNA cleavage factor complex"/>
    <property type="evidence" value="ECO:0000353"/>
    <property type="project" value="ComplexPortal"/>
</dbReference>
<dbReference type="GO" id="GO:0005634">
    <property type="term" value="C:nucleus"/>
    <property type="evidence" value="ECO:0000314"/>
    <property type="project" value="SGD"/>
</dbReference>
<dbReference type="GO" id="GO:0003729">
    <property type="term" value="F:mRNA binding"/>
    <property type="evidence" value="ECO:0000314"/>
    <property type="project" value="SGD"/>
</dbReference>
<dbReference type="GO" id="GO:0000993">
    <property type="term" value="F:RNA polymerase II complex binding"/>
    <property type="evidence" value="ECO:0000314"/>
    <property type="project" value="SGD"/>
</dbReference>
<dbReference type="GO" id="GO:0031124">
    <property type="term" value="P:mRNA 3'-end processing"/>
    <property type="evidence" value="ECO:0000314"/>
    <property type="project" value="ComplexPortal"/>
</dbReference>
<dbReference type="GO" id="GO:0006369">
    <property type="term" value="P:termination of RNA polymerase II transcription"/>
    <property type="evidence" value="ECO:0000314"/>
    <property type="project" value="SGD"/>
</dbReference>
<dbReference type="GO" id="GO:0030847">
    <property type="term" value="P:termination of RNA polymerase II transcription, exosome-dependent"/>
    <property type="evidence" value="ECO:0000315"/>
    <property type="project" value="SGD"/>
</dbReference>
<dbReference type="GO" id="GO:0030846">
    <property type="term" value="P:termination of RNA polymerase II transcription, poly(A)-coupled"/>
    <property type="evidence" value="ECO:0000315"/>
    <property type="project" value="SGD"/>
</dbReference>
<dbReference type="CDD" id="cd16982">
    <property type="entry name" value="CID_Pcf11"/>
    <property type="match status" value="1"/>
</dbReference>
<dbReference type="FunFam" id="1.25.40.90:FF:000016">
    <property type="entry name" value="mRNA cleavage factor complex component Pcf11"/>
    <property type="match status" value="1"/>
</dbReference>
<dbReference type="Gene3D" id="1.25.40.90">
    <property type="match status" value="1"/>
</dbReference>
<dbReference type="InterPro" id="IPR006569">
    <property type="entry name" value="CID_dom"/>
</dbReference>
<dbReference type="InterPro" id="IPR008942">
    <property type="entry name" value="ENTH_VHS"/>
</dbReference>
<dbReference type="InterPro" id="IPR045154">
    <property type="entry name" value="PCF11-like"/>
</dbReference>
<dbReference type="InterPro" id="IPR054127">
    <property type="entry name" value="Pcf11_C"/>
</dbReference>
<dbReference type="InterPro" id="IPR047415">
    <property type="entry name" value="Pcf11_CID"/>
</dbReference>
<dbReference type="InterPro" id="IPR021605">
    <property type="entry name" value="Pcf11_Clp1-ID"/>
</dbReference>
<dbReference type="InterPro" id="IPR054128">
    <property type="entry name" value="Pfc11_Rna14/15-ID"/>
</dbReference>
<dbReference type="PANTHER" id="PTHR15921:SF3">
    <property type="entry name" value="PRE-MRNA CLEAVAGE COMPLEX 2 PROTEIN PCF11"/>
    <property type="match status" value="1"/>
</dbReference>
<dbReference type="PANTHER" id="PTHR15921">
    <property type="entry name" value="PRE-MRNA CLEAVAGE COMPLEX II"/>
    <property type="match status" value="1"/>
</dbReference>
<dbReference type="Pfam" id="PF04818">
    <property type="entry name" value="CID"/>
    <property type="match status" value="1"/>
</dbReference>
<dbReference type="Pfam" id="PF21936">
    <property type="entry name" value="Pcf11_C"/>
    <property type="match status" value="1"/>
</dbReference>
<dbReference type="Pfam" id="PF11526">
    <property type="entry name" value="Pfc11_Clp1_ID"/>
    <property type="match status" value="1"/>
</dbReference>
<dbReference type="Pfam" id="PF21940">
    <property type="entry name" value="Pfc11_Rna14-15-ID"/>
    <property type="match status" value="1"/>
</dbReference>
<dbReference type="SMART" id="SM00582">
    <property type="entry name" value="RPR"/>
    <property type="match status" value="1"/>
</dbReference>
<dbReference type="SUPFAM" id="SSF48464">
    <property type="entry name" value="ENTH/VHS domain"/>
    <property type="match status" value="1"/>
</dbReference>
<dbReference type="PROSITE" id="PS51391">
    <property type="entry name" value="CID"/>
    <property type="match status" value="1"/>
</dbReference>
<organism>
    <name type="scientific">Saccharomyces cerevisiae (strain ATCC 204508 / S288c)</name>
    <name type="common">Baker's yeast</name>
    <dbReference type="NCBI Taxonomy" id="559292"/>
    <lineage>
        <taxon>Eukaryota</taxon>
        <taxon>Fungi</taxon>
        <taxon>Dikarya</taxon>
        <taxon>Ascomycota</taxon>
        <taxon>Saccharomycotina</taxon>
        <taxon>Saccharomycetes</taxon>
        <taxon>Saccharomycetales</taxon>
        <taxon>Saccharomycetaceae</taxon>
        <taxon>Saccharomyces</taxon>
    </lineage>
</organism>
<accession>P39081</accession>
<accession>D6VSL0</accession>
<accession>Q04932</accession>
<comment type="function">
    <text evidence="4 8">Component of the cleavage factor IA (CFIA) complex, which is involved in the endonucleolytic cleavage during polyadenylation-dependent pre-mRNA 3'-end formation and cooperates with cleavage factor NAB4/CFIB and the cleavage and polyadenylation factor (CPF) complex. Independently involved in RNA polymerase II transcript termination. Binds RNA. Seems to bridge RNA polymerase II and the native transcript and may be involved in dismantling the RNA polymerase II elongation complex.</text>
</comment>
<comment type="subunit">
    <text evidence="3 5 7 9">Component of the CFIA complex, which is composed of RNA14, RNA15, PCF11 and CLP1. Interacts with RNA14, RNA15 and RTT103. Interacts directly with the phosphorylated CTD domain of RPB1/RNA polymerase II.</text>
</comment>
<comment type="interaction">
    <interactant intactId="EBI-12980">
        <id>P39081</id>
    </interactant>
    <interactant intactId="EBI-29732">
        <id>Q08685</id>
        <label>CLP1</label>
    </interactant>
    <organismsDiffer>false</organismsDiffer>
    <experiments>14</experiments>
</comment>
<comment type="interaction">
    <interactant intactId="EBI-12980">
        <id>P39081</id>
    </interactant>
    <interactant intactId="EBI-15632">
        <id>P25298</id>
        <label>RNA14</label>
    </interactant>
    <organismsDiffer>false</organismsDiffer>
    <experiments>11</experiments>
</comment>
<comment type="interaction">
    <interactant intactId="EBI-12980">
        <id>P39081</id>
    </interactant>
    <interactant intactId="EBI-15640">
        <id>P25299</id>
        <label>RNA15</label>
    </interactant>
    <organismsDiffer>false</organismsDiffer>
    <experiments>9</experiments>
</comment>
<comment type="interaction">
    <interactant intactId="EBI-12980">
        <id>P39081</id>
    </interactant>
    <interactant intactId="EBI-18140">
        <id>P40073</id>
        <label>SHO1</label>
    </interactant>
    <organismsDiffer>false</organismsDiffer>
    <experiments>2</experiments>
</comment>
<comment type="interaction">
    <interactant intactId="EBI-12980">
        <id>P39081</id>
    </interactant>
    <interactant intactId="EBI-29516">
        <id>Q12159</id>
        <label>YRA1</label>
    </interactant>
    <organismsDiffer>false</organismsDiffer>
    <experiments>2</experiments>
</comment>
<comment type="subcellular location">
    <subcellularLocation>
        <location evidence="10">Nucleus</location>
    </subcellularLocation>
</comment>
<comment type="miscellaneous">
    <text evidence="6">Present with 2800 molecules/cell in log phase SD medium.</text>
</comment>
<name>PCF11_YEAST</name>
<keyword id="KW-0002">3D-structure</keyword>
<keyword id="KW-0507">mRNA processing</keyword>
<keyword id="KW-0539">Nucleus</keyword>
<keyword id="KW-1185">Reference proteome</keyword>
<keyword id="KW-0694">RNA-binding</keyword>
<keyword id="KW-0804">Transcription</keyword>
<keyword id="KW-0805">Transcription regulation</keyword>
<keyword id="KW-0806">Transcription termination</keyword>
<feature type="chain" id="PRO_0000058247" description="Protein PCF11">
    <location>
        <begin position="1"/>
        <end position="626"/>
    </location>
</feature>
<feature type="domain" description="CID" evidence="1">
    <location>
        <begin position="4"/>
        <end position="139"/>
    </location>
</feature>
<feature type="region of interest" description="Interaction with RBP1 CTD (CID)">
    <location>
        <begin position="1"/>
        <end position="130"/>
    </location>
</feature>
<feature type="region of interest" description="Disordered" evidence="2">
    <location>
        <begin position="263"/>
        <end position="286"/>
    </location>
</feature>
<feature type="mutagenesis site" description="Loss of interaction with RBP1 CTD." evidence="5">
    <original>A</original>
    <variation>D</variation>
    <location>
        <position position="66"/>
    </location>
</feature>
<feature type="mutagenesis site" description="Loss of interaction with RBP1 CTD." evidence="5">
    <original>DSI</original>
    <variation>AAA</variation>
    <location>
        <begin position="68"/>
        <end position="70"/>
    </location>
</feature>
<feature type="sequence conflict" description="In Ref. 3; AAC33145." evidence="10" ref="3">
    <original>NSL</original>
    <variation>ILS</variation>
    <location>
        <begin position="286"/>
        <end position="288"/>
    </location>
</feature>
<feature type="sequence conflict" description="In Ref. 3; AAC33145." evidence="10" ref="3">
    <original>I</original>
    <variation>V</variation>
    <location>
        <position position="515"/>
    </location>
</feature>
<feature type="helix" evidence="11">
    <location>
        <begin position="3"/>
        <end position="16"/>
    </location>
</feature>
<feature type="helix" evidence="11">
    <location>
        <begin position="24"/>
        <end position="36"/>
    </location>
</feature>
<feature type="helix" evidence="11">
    <location>
        <begin position="38"/>
        <end position="40"/>
    </location>
</feature>
<feature type="helix" evidence="11">
    <location>
        <begin position="41"/>
        <end position="54"/>
    </location>
</feature>
<feature type="helix" evidence="11">
    <location>
        <begin position="57"/>
        <end position="73"/>
    </location>
</feature>
<feature type="helix" evidence="11">
    <location>
        <begin position="78"/>
        <end position="83"/>
    </location>
</feature>
<feature type="helix" evidence="11">
    <location>
        <begin position="86"/>
        <end position="95"/>
    </location>
</feature>
<feature type="helix" evidence="11">
    <location>
        <begin position="99"/>
        <end position="112"/>
    </location>
</feature>
<feature type="helix" evidence="11">
    <location>
        <begin position="115"/>
        <end position="117"/>
    </location>
</feature>
<feature type="helix" evidence="11">
    <location>
        <begin position="125"/>
        <end position="137"/>
    </location>
</feature>
<feature type="helix" evidence="13">
    <location>
        <begin position="486"/>
        <end position="490"/>
    </location>
</feature>
<feature type="helix" evidence="13">
    <location>
        <begin position="495"/>
        <end position="498"/>
    </location>
</feature>
<feature type="helix" evidence="12">
    <location>
        <begin position="543"/>
        <end position="547"/>
    </location>
</feature>
<feature type="strand" evidence="12">
    <location>
        <begin position="550"/>
        <end position="553"/>
    </location>
</feature>
<feature type="turn" evidence="14">
    <location>
        <begin position="555"/>
        <end position="557"/>
    </location>
</feature>
<feature type="strand" evidence="12">
    <location>
        <begin position="561"/>
        <end position="564"/>
    </location>
</feature>
<feature type="turn" evidence="12">
    <location>
        <begin position="565"/>
        <end position="568"/>
    </location>
</feature>
<feature type="strand" evidence="12">
    <location>
        <begin position="569"/>
        <end position="576"/>
    </location>
</feature>
<feature type="turn" evidence="12">
    <location>
        <begin position="577"/>
        <end position="580"/>
    </location>
</feature>
<feature type="strand" evidence="12">
    <location>
        <begin position="581"/>
        <end position="585"/>
    </location>
</feature>
<feature type="strand" evidence="12">
    <location>
        <begin position="587"/>
        <end position="590"/>
    </location>
</feature>
<feature type="strand" evidence="12">
    <location>
        <begin position="593"/>
        <end position="596"/>
    </location>
</feature>
<feature type="helix" evidence="12">
    <location>
        <begin position="597"/>
        <end position="603"/>
    </location>
</feature>
<sequence>MDHDTEVIVKDFNSILEELTFNSRPIITTLTKLAEENISCAQYFVDAIESRIEKCMPKQKLYAFYALDSICKNVGSPYTIYFSRNLFNLYKRTYLLVDNTTRTKLINMFKLWLNPNDTGLPLFEGSALEKIEQFLIKASALHQKNLQAMLPTPTVPLLLRDIDKLTCLTSERLKNQPNDEKLKMKLLVLSQLKQELKREKLTLNALKQVQMQLRQVFSQDQQVLQERMRYHELQQQQQQQQQQQQQQQQQQQQYHETKDMVGSYTQNSNSAIPLFGNNSDTTNQQNSLSSSLFGNISGVESFQEIEKKKSLNKINNLYASLKAEGLIYTPPKESIVTLYKKLNGHSNYSLDSHEKQLMKNLPKIPLLNDILSDCKAYFATVNIDVLNNPSLQLSEQTLLQENPIVQNNLIHLLYRSKPNKCSVCGKRFGNSESEKLLQNEHLDWHFRINTRIKGSQNTANTGISNSNLNTTTTRKNIQSRNWYLSDSQWAAFKDDEITSTKHKNDYTDPHANKNIDKSALNIHADENDEGSVDNTLGSDRSNELEIRGKYVVVPETSQDMAFKCPICKETVTGVYDEESGEWVWKNTIEVNGKYFHSTCYHETSQNSSKSNSGKVGLDDLKKLVTK</sequence>
<reference key="1">
    <citation type="journal article" date="1997" name="Nature">
        <title>The nucleotide sequence of Saccharomyces cerevisiae chromosome IV.</title>
        <authorList>
            <person name="Jacq C."/>
            <person name="Alt-Moerbe J."/>
            <person name="Andre B."/>
            <person name="Arnold W."/>
            <person name="Bahr A."/>
            <person name="Ballesta J.P.G."/>
            <person name="Bargues M."/>
            <person name="Baron L."/>
            <person name="Becker A."/>
            <person name="Biteau N."/>
            <person name="Bloecker H."/>
            <person name="Blugeon C."/>
            <person name="Boskovic J."/>
            <person name="Brandt P."/>
            <person name="Brueckner M."/>
            <person name="Buitrago M.J."/>
            <person name="Coster F."/>
            <person name="Delaveau T."/>
            <person name="del Rey F."/>
            <person name="Dujon B."/>
            <person name="Eide L.G."/>
            <person name="Garcia-Cantalejo J.M."/>
            <person name="Goffeau A."/>
            <person name="Gomez-Peris A."/>
            <person name="Granotier C."/>
            <person name="Hanemann V."/>
            <person name="Hankeln T."/>
            <person name="Hoheisel J.D."/>
            <person name="Jaeger W."/>
            <person name="Jimenez A."/>
            <person name="Jonniaux J.-L."/>
            <person name="Kraemer C."/>
            <person name="Kuester H."/>
            <person name="Laamanen P."/>
            <person name="Legros Y."/>
            <person name="Louis E.J."/>
            <person name="Moeller-Rieker S."/>
            <person name="Monnet A."/>
            <person name="Moro M."/>
            <person name="Mueller-Auer S."/>
            <person name="Nussbaumer B."/>
            <person name="Paricio N."/>
            <person name="Paulin L."/>
            <person name="Perea J."/>
            <person name="Perez-Alonso M."/>
            <person name="Perez-Ortin J.E."/>
            <person name="Pohl T.M."/>
            <person name="Prydz H."/>
            <person name="Purnelle B."/>
            <person name="Rasmussen S.W."/>
            <person name="Remacha M.A."/>
            <person name="Revuelta J.L."/>
            <person name="Rieger M."/>
            <person name="Salom D."/>
            <person name="Saluz H.P."/>
            <person name="Saiz J.E."/>
            <person name="Saren A.-M."/>
            <person name="Schaefer M."/>
            <person name="Scharfe M."/>
            <person name="Schmidt E.R."/>
            <person name="Schneider C."/>
            <person name="Scholler P."/>
            <person name="Schwarz S."/>
            <person name="Soler-Mira A."/>
            <person name="Urrestarazu L.A."/>
            <person name="Verhasselt P."/>
            <person name="Vissers S."/>
            <person name="Voet M."/>
            <person name="Volckaert G."/>
            <person name="Wagner G."/>
            <person name="Wambutt R."/>
            <person name="Wedler E."/>
            <person name="Wedler H."/>
            <person name="Woelfl S."/>
            <person name="Harris D.E."/>
            <person name="Bowman S."/>
            <person name="Brown D."/>
            <person name="Churcher C.M."/>
            <person name="Connor R."/>
            <person name="Dedman K."/>
            <person name="Gentles S."/>
            <person name="Hamlin N."/>
            <person name="Hunt S."/>
            <person name="Jones L."/>
            <person name="McDonald S."/>
            <person name="Murphy L.D."/>
            <person name="Niblett D."/>
            <person name="Odell C."/>
            <person name="Oliver K."/>
            <person name="Rajandream M.A."/>
            <person name="Richards C."/>
            <person name="Shore L."/>
            <person name="Walsh S.V."/>
            <person name="Barrell B.G."/>
            <person name="Dietrich F.S."/>
            <person name="Mulligan J.T."/>
            <person name="Allen E."/>
            <person name="Araujo R."/>
            <person name="Aviles E."/>
            <person name="Berno A."/>
            <person name="Carpenter J."/>
            <person name="Chen E."/>
            <person name="Cherry J.M."/>
            <person name="Chung E."/>
            <person name="Duncan M."/>
            <person name="Hunicke-Smith S."/>
            <person name="Hyman R.W."/>
            <person name="Komp C."/>
            <person name="Lashkari D."/>
            <person name="Lew H."/>
            <person name="Lin D."/>
            <person name="Mosedale D."/>
            <person name="Nakahara K."/>
            <person name="Namath A."/>
            <person name="Oefner P."/>
            <person name="Oh C."/>
            <person name="Petel F.X."/>
            <person name="Roberts D."/>
            <person name="Schramm S."/>
            <person name="Schroeder M."/>
            <person name="Shogren T."/>
            <person name="Shroff N."/>
            <person name="Winant A."/>
            <person name="Yelton M.A."/>
            <person name="Botstein D."/>
            <person name="Davis R.W."/>
            <person name="Johnston M."/>
            <person name="Andrews S."/>
            <person name="Brinkman R."/>
            <person name="Cooper J."/>
            <person name="Ding H."/>
            <person name="Du Z."/>
            <person name="Favello A."/>
            <person name="Fulton L."/>
            <person name="Gattung S."/>
            <person name="Greco T."/>
            <person name="Hallsworth K."/>
            <person name="Hawkins J."/>
            <person name="Hillier L.W."/>
            <person name="Jier M."/>
            <person name="Johnson D."/>
            <person name="Johnston L."/>
            <person name="Kirsten J."/>
            <person name="Kucaba T."/>
            <person name="Langston Y."/>
            <person name="Latreille P."/>
            <person name="Le T."/>
            <person name="Mardis E."/>
            <person name="Menezes S."/>
            <person name="Miller N."/>
            <person name="Nhan M."/>
            <person name="Pauley A."/>
            <person name="Peluso D."/>
            <person name="Rifkin L."/>
            <person name="Riles L."/>
            <person name="Taich A."/>
            <person name="Trevaskis E."/>
            <person name="Vignati D."/>
            <person name="Wilcox L."/>
            <person name="Wohldman P."/>
            <person name="Vaudin M."/>
            <person name="Wilson R."/>
            <person name="Waterston R."/>
            <person name="Albermann K."/>
            <person name="Hani J."/>
            <person name="Heumann K."/>
            <person name="Kleine K."/>
            <person name="Mewes H.-W."/>
            <person name="Zollner A."/>
            <person name="Zaccaria P."/>
        </authorList>
    </citation>
    <scope>NUCLEOTIDE SEQUENCE [LARGE SCALE GENOMIC DNA]</scope>
    <source>
        <strain>ATCC 204508 / S288c</strain>
    </source>
</reference>
<reference key="2">
    <citation type="journal article" date="2014" name="G3 (Bethesda)">
        <title>The reference genome sequence of Saccharomyces cerevisiae: Then and now.</title>
        <authorList>
            <person name="Engel S.R."/>
            <person name="Dietrich F.S."/>
            <person name="Fisk D.G."/>
            <person name="Binkley G."/>
            <person name="Balakrishnan R."/>
            <person name="Costanzo M.C."/>
            <person name="Dwight S.S."/>
            <person name="Hitz B.C."/>
            <person name="Karra K."/>
            <person name="Nash R.S."/>
            <person name="Weng S."/>
            <person name="Wong E.D."/>
            <person name="Lloyd P."/>
            <person name="Skrzypek M.S."/>
            <person name="Miyasato S.R."/>
            <person name="Simison M."/>
            <person name="Cherry J.M."/>
        </authorList>
    </citation>
    <scope>GENOME REANNOTATION</scope>
    <source>
        <strain>ATCC 204508 / S288c</strain>
    </source>
</reference>
<reference key="3">
    <citation type="journal article" date="1995" name="Nucleic Acids Res.">
        <title>Insertion site specificity of the transposon Tn3.</title>
        <authorList>
            <person name="Davies C.J."/>
            <person name="Hutchison C.A. III"/>
        </authorList>
    </citation>
    <scope>NUCLEOTIDE SEQUENCE [GENOMIC DNA] OF 286-626</scope>
</reference>
<reference key="4">
    <citation type="journal article" date="1997" name="Mol. Cell. Biol.">
        <title>PCF11 encodes a third protein component of yeast cleavage and polyadenylation factor I.</title>
        <authorList>
            <person name="Amrani N."/>
            <person name="Minet M."/>
            <person name="Wyers F."/>
            <person name="Dufour M.-E."/>
            <person name="Aggerbeck L.P."/>
            <person name="Lacroute F."/>
        </authorList>
    </citation>
    <scope>IDENTIFICATION IN THE CFIA COMPLEX</scope>
    <scope>INTERACTION WITH RNA14 AND RNA15</scope>
</reference>
<reference key="5">
    <citation type="journal article" date="2001" name="Proc. Natl. Acad. Sci. U.S.A.">
        <title>Five subunits are required for reconstitution of the cleavage and polyadenylation activities of Saccharomyces cerevisiae cleavage factor I.</title>
        <authorList>
            <person name="Gross S."/>
            <person name="Moore C."/>
        </authorList>
    </citation>
    <scope>FUNCTION OF THE CFIA COMPLEX</scope>
</reference>
<reference key="6">
    <citation type="journal article" date="2001" name="Proc. Natl. Acad. Sci. U.S.A.">
        <title>Cleavage/polyadenylation factor IA associates with the carboxyl-terminal domain of RNA polymerase II in Saccharomyces cerevisiae.</title>
        <authorList>
            <person name="Barilla D."/>
            <person name="Lee B.A."/>
            <person name="Proudfoot N.J."/>
        </authorList>
    </citation>
    <scope>INTERACTION WITH RBP1</scope>
</reference>
<reference key="7">
    <citation type="journal article" date="2003" name="EMBO J.">
        <title>Independent functions of yeast Pcf11p in pre-mRNA 3' end processing and in transcription termination.</title>
        <authorList>
            <person name="Sadowski M."/>
            <person name="Dichtl B."/>
            <person name="Huebner W."/>
            <person name="Keller W."/>
        </authorList>
    </citation>
    <scope>INTERACTION WITH RBP1</scope>
    <scope>MUTAGENESIS OF ALA-66 AND 68-ASP--ILE-70</scope>
</reference>
<reference key="8">
    <citation type="journal article" date="2003" name="Nature">
        <title>Global analysis of protein expression in yeast.</title>
        <authorList>
            <person name="Ghaemmaghami S."/>
            <person name="Huh W.-K."/>
            <person name="Bower K."/>
            <person name="Howson R.W."/>
            <person name="Belle A."/>
            <person name="Dephoure N."/>
            <person name="O'Shea E.K."/>
            <person name="Weissman J.S."/>
        </authorList>
    </citation>
    <scope>LEVEL OF PROTEIN EXPRESSION [LARGE SCALE ANALYSIS]</scope>
</reference>
<reference key="9">
    <citation type="journal article" date="2004" name="Nature">
        <title>The yeast Rat1 exonuclease promotes transcription termination by RNA polymerase II.</title>
        <authorList>
            <person name="Kim M."/>
            <person name="Krogan N.J."/>
            <person name="Vasiljeva L."/>
            <person name="Rando O.J."/>
            <person name="Nedea E."/>
            <person name="Greenblatt J.F."/>
            <person name="Buratowski S."/>
        </authorList>
    </citation>
    <scope>INTERACTION WITH RTT103</scope>
</reference>
<reference key="10">
    <citation type="journal article" date="2005" name="Genes Dev.">
        <title>CTD-dependent dismantling of the RNA polymerase II elongation complex by the pre-mRNA 3'-end processing factor, Pcf11.</title>
        <authorList>
            <person name="Zhang Z."/>
            <person name="Fu J."/>
            <person name="Gilmour D.S."/>
        </authorList>
    </citation>
    <scope>FUNCTION</scope>
    <scope>RNA-BINDING</scope>
</reference>
<reference key="11">
    <citation type="journal article" date="2004" name="Nature">
        <title>Recognition of RNA polymerase II carboxy-terminal domain by 3'-RNA-processing factors.</title>
        <authorList>
            <person name="Meinhart A."/>
            <person name="Cramer P."/>
        </authorList>
    </citation>
    <scope>X-RAY CRYSTALLOGRAPHY (2.1 ANGSTROMS) OF 1-140</scope>
</reference>
<reference key="12">
    <citation type="journal article" date="2005" name="Nat. Struct. Mol. Biol.">
        <title>Key features of the interaction between Pcf11 CID and RNA polymerase II CTD.</title>
        <authorList>
            <person name="Noble C.G."/>
            <person name="Hollingworth D."/>
            <person name="Martin S.R."/>
            <person name="Ennis-Adeniran V."/>
            <person name="Smerdon S.J."/>
            <person name="Kelly G."/>
            <person name="Taylor I.A."/>
            <person name="Ramos A."/>
        </authorList>
    </citation>
    <scope>X-RAY CRYSTALLOGRAPHY (2.3 ANGSTROMS) OF 1-138</scope>
</reference>
<proteinExistence type="evidence at protein level"/>
<protein>
    <recommendedName>
        <fullName>Protein PCF11</fullName>
    </recommendedName>
    <alternativeName>
        <fullName>protein 1 of CF I</fullName>
    </alternativeName>
</protein>
<gene>
    <name type="primary">PCF11</name>
    <name type="ordered locus">YDR228C</name>
    <name type="ORF">YD9934.13C</name>
</gene>